<organism>
    <name type="scientific">Bordetella parapertussis (strain 12822 / ATCC BAA-587 / NCTC 13253)</name>
    <dbReference type="NCBI Taxonomy" id="257311"/>
    <lineage>
        <taxon>Bacteria</taxon>
        <taxon>Pseudomonadati</taxon>
        <taxon>Pseudomonadota</taxon>
        <taxon>Betaproteobacteria</taxon>
        <taxon>Burkholderiales</taxon>
        <taxon>Alcaligenaceae</taxon>
        <taxon>Bordetella</taxon>
    </lineage>
</organism>
<name>TPIS_BORPA</name>
<dbReference type="EC" id="5.3.1.1" evidence="1"/>
<dbReference type="EMBL" id="BX640433">
    <property type="protein sequence ID" value="CAE38711.1"/>
    <property type="molecule type" value="Genomic_DNA"/>
</dbReference>
<dbReference type="RefSeq" id="WP_003813996.1">
    <property type="nucleotide sequence ID" value="NC_002928.3"/>
</dbReference>
<dbReference type="SMR" id="Q7W575"/>
<dbReference type="GeneID" id="93205210"/>
<dbReference type="KEGG" id="bpa:BPP3426"/>
<dbReference type="HOGENOM" id="CLU_024251_2_1_4"/>
<dbReference type="UniPathway" id="UPA00109">
    <property type="reaction ID" value="UER00189"/>
</dbReference>
<dbReference type="UniPathway" id="UPA00138"/>
<dbReference type="Proteomes" id="UP000001421">
    <property type="component" value="Chromosome"/>
</dbReference>
<dbReference type="GO" id="GO:0005829">
    <property type="term" value="C:cytosol"/>
    <property type="evidence" value="ECO:0007669"/>
    <property type="project" value="TreeGrafter"/>
</dbReference>
<dbReference type="GO" id="GO:0004807">
    <property type="term" value="F:triose-phosphate isomerase activity"/>
    <property type="evidence" value="ECO:0007669"/>
    <property type="project" value="UniProtKB-UniRule"/>
</dbReference>
<dbReference type="GO" id="GO:0006094">
    <property type="term" value="P:gluconeogenesis"/>
    <property type="evidence" value="ECO:0007669"/>
    <property type="project" value="UniProtKB-UniRule"/>
</dbReference>
<dbReference type="GO" id="GO:0046166">
    <property type="term" value="P:glyceraldehyde-3-phosphate biosynthetic process"/>
    <property type="evidence" value="ECO:0007669"/>
    <property type="project" value="TreeGrafter"/>
</dbReference>
<dbReference type="GO" id="GO:0019563">
    <property type="term" value="P:glycerol catabolic process"/>
    <property type="evidence" value="ECO:0007669"/>
    <property type="project" value="TreeGrafter"/>
</dbReference>
<dbReference type="GO" id="GO:0006096">
    <property type="term" value="P:glycolytic process"/>
    <property type="evidence" value="ECO:0007669"/>
    <property type="project" value="UniProtKB-UniRule"/>
</dbReference>
<dbReference type="CDD" id="cd00311">
    <property type="entry name" value="TIM"/>
    <property type="match status" value="1"/>
</dbReference>
<dbReference type="FunFam" id="3.20.20.70:FF:000016">
    <property type="entry name" value="Triosephosphate isomerase"/>
    <property type="match status" value="1"/>
</dbReference>
<dbReference type="Gene3D" id="3.20.20.70">
    <property type="entry name" value="Aldolase class I"/>
    <property type="match status" value="1"/>
</dbReference>
<dbReference type="HAMAP" id="MF_00147_B">
    <property type="entry name" value="TIM_B"/>
    <property type="match status" value="1"/>
</dbReference>
<dbReference type="InterPro" id="IPR013785">
    <property type="entry name" value="Aldolase_TIM"/>
</dbReference>
<dbReference type="InterPro" id="IPR035990">
    <property type="entry name" value="TIM_sf"/>
</dbReference>
<dbReference type="InterPro" id="IPR022896">
    <property type="entry name" value="TrioseP_Isoase_bac/euk"/>
</dbReference>
<dbReference type="InterPro" id="IPR000652">
    <property type="entry name" value="Triosephosphate_isomerase"/>
</dbReference>
<dbReference type="InterPro" id="IPR020861">
    <property type="entry name" value="Triosephosphate_isomerase_AS"/>
</dbReference>
<dbReference type="NCBIfam" id="TIGR00419">
    <property type="entry name" value="tim"/>
    <property type="match status" value="1"/>
</dbReference>
<dbReference type="PANTHER" id="PTHR21139">
    <property type="entry name" value="TRIOSEPHOSPHATE ISOMERASE"/>
    <property type="match status" value="1"/>
</dbReference>
<dbReference type="PANTHER" id="PTHR21139:SF42">
    <property type="entry name" value="TRIOSEPHOSPHATE ISOMERASE"/>
    <property type="match status" value="1"/>
</dbReference>
<dbReference type="Pfam" id="PF00121">
    <property type="entry name" value="TIM"/>
    <property type="match status" value="1"/>
</dbReference>
<dbReference type="SUPFAM" id="SSF51351">
    <property type="entry name" value="Triosephosphate isomerase (TIM)"/>
    <property type="match status" value="1"/>
</dbReference>
<dbReference type="PROSITE" id="PS00171">
    <property type="entry name" value="TIM_1"/>
    <property type="match status" value="1"/>
</dbReference>
<dbReference type="PROSITE" id="PS51440">
    <property type="entry name" value="TIM_2"/>
    <property type="match status" value="1"/>
</dbReference>
<comment type="function">
    <text evidence="1">Involved in the gluconeogenesis. Catalyzes stereospecifically the conversion of dihydroxyacetone phosphate (DHAP) to D-glyceraldehyde-3-phosphate (G3P).</text>
</comment>
<comment type="catalytic activity">
    <reaction evidence="1">
        <text>D-glyceraldehyde 3-phosphate = dihydroxyacetone phosphate</text>
        <dbReference type="Rhea" id="RHEA:18585"/>
        <dbReference type="ChEBI" id="CHEBI:57642"/>
        <dbReference type="ChEBI" id="CHEBI:59776"/>
        <dbReference type="EC" id="5.3.1.1"/>
    </reaction>
</comment>
<comment type="pathway">
    <text evidence="1">Carbohydrate biosynthesis; gluconeogenesis.</text>
</comment>
<comment type="pathway">
    <text evidence="1">Carbohydrate degradation; glycolysis; D-glyceraldehyde 3-phosphate from glycerone phosphate: step 1/1.</text>
</comment>
<comment type="subunit">
    <text evidence="1">Homodimer.</text>
</comment>
<comment type="subcellular location">
    <subcellularLocation>
        <location evidence="1">Cytoplasm</location>
    </subcellularLocation>
</comment>
<comment type="similarity">
    <text evidence="1">Belongs to the triosephosphate isomerase family.</text>
</comment>
<evidence type="ECO:0000255" key="1">
    <source>
        <dbReference type="HAMAP-Rule" id="MF_00147"/>
    </source>
</evidence>
<feature type="chain" id="PRO_0000090185" description="Triosephosphate isomerase">
    <location>
        <begin position="1"/>
        <end position="248"/>
    </location>
</feature>
<feature type="active site" description="Electrophile" evidence="1">
    <location>
        <position position="99"/>
    </location>
</feature>
<feature type="active site" description="Proton acceptor" evidence="1">
    <location>
        <position position="170"/>
    </location>
</feature>
<feature type="binding site" evidence="1">
    <location>
        <begin position="14"/>
        <end position="16"/>
    </location>
    <ligand>
        <name>substrate</name>
    </ligand>
</feature>
<feature type="binding site" evidence="1">
    <location>
        <position position="176"/>
    </location>
    <ligand>
        <name>substrate</name>
    </ligand>
</feature>
<feature type="binding site" evidence="1">
    <location>
        <position position="212"/>
    </location>
    <ligand>
        <name>substrate</name>
    </ligand>
</feature>
<feature type="binding site" evidence="1">
    <location>
        <begin position="233"/>
        <end position="234"/>
    </location>
    <ligand>
        <name>substrate</name>
    </ligand>
</feature>
<protein>
    <recommendedName>
        <fullName evidence="1">Triosephosphate isomerase</fullName>
        <shortName evidence="1">TIM</shortName>
        <shortName evidence="1">TPI</shortName>
        <ecNumber evidence="1">5.3.1.1</ecNumber>
    </recommendedName>
    <alternativeName>
        <fullName evidence="1">Triose-phosphate isomerase</fullName>
    </alternativeName>
</protein>
<gene>
    <name evidence="1" type="primary">tpiA</name>
    <name type="synonym">tpi</name>
    <name type="ordered locus">BPP3426</name>
</gene>
<keyword id="KW-0963">Cytoplasm</keyword>
<keyword id="KW-0312">Gluconeogenesis</keyword>
<keyword id="KW-0324">Glycolysis</keyword>
<keyword id="KW-0413">Isomerase</keyword>
<reference key="1">
    <citation type="journal article" date="2003" name="Nat. Genet.">
        <title>Comparative analysis of the genome sequences of Bordetella pertussis, Bordetella parapertussis and Bordetella bronchiseptica.</title>
        <authorList>
            <person name="Parkhill J."/>
            <person name="Sebaihia M."/>
            <person name="Preston A."/>
            <person name="Murphy L.D."/>
            <person name="Thomson N.R."/>
            <person name="Harris D.E."/>
            <person name="Holden M.T.G."/>
            <person name="Churcher C.M."/>
            <person name="Bentley S.D."/>
            <person name="Mungall K.L."/>
            <person name="Cerdeno-Tarraga A.-M."/>
            <person name="Temple L."/>
            <person name="James K.D."/>
            <person name="Harris B."/>
            <person name="Quail M.A."/>
            <person name="Achtman M."/>
            <person name="Atkin R."/>
            <person name="Baker S."/>
            <person name="Basham D."/>
            <person name="Bason N."/>
            <person name="Cherevach I."/>
            <person name="Chillingworth T."/>
            <person name="Collins M."/>
            <person name="Cronin A."/>
            <person name="Davis P."/>
            <person name="Doggett J."/>
            <person name="Feltwell T."/>
            <person name="Goble A."/>
            <person name="Hamlin N."/>
            <person name="Hauser H."/>
            <person name="Holroyd S."/>
            <person name="Jagels K."/>
            <person name="Leather S."/>
            <person name="Moule S."/>
            <person name="Norberczak H."/>
            <person name="O'Neil S."/>
            <person name="Ormond D."/>
            <person name="Price C."/>
            <person name="Rabbinowitsch E."/>
            <person name="Rutter S."/>
            <person name="Sanders M."/>
            <person name="Saunders D."/>
            <person name="Seeger K."/>
            <person name="Sharp S."/>
            <person name="Simmonds M."/>
            <person name="Skelton J."/>
            <person name="Squares R."/>
            <person name="Squares S."/>
            <person name="Stevens K."/>
            <person name="Unwin L."/>
            <person name="Whitehead S."/>
            <person name="Barrell B.G."/>
            <person name="Maskell D.J."/>
        </authorList>
    </citation>
    <scope>NUCLEOTIDE SEQUENCE [LARGE SCALE GENOMIC DNA]</scope>
    <source>
        <strain>12822 / ATCC BAA-587 / NCTC 13253</strain>
    </source>
</reference>
<proteinExistence type="inferred from homology"/>
<sequence>MTTAENRARLVLGNWKMHGNLAENAALLAELRAADAAAHCEMGVCVPFPYLAQTAAALQGSAIGWGAQDVSAHAKGAYTGEVAAPMLAEFGCRWVLVGHSERRTLHAESDQLVADKARAALEAGLTPVVCVGESLQEREGGNTLGVIERQLEPVLALGRDALVRMVLAYEPVWAIGTGRTASPEQAQEVHSAIRVALDGLQASQVRVLYGGSVKGANAASLFAMPDIDGGLVGGASLVAEEFLRIAAA</sequence>
<accession>Q7W575</accession>